<accession>Q6H611</accession>
<accession>A0A0P0XLK9</accession>
<feature type="transit peptide" description="Mitochondrion" evidence="1">
    <location>
        <begin position="1"/>
        <end position="41"/>
    </location>
</feature>
<feature type="chain" id="PRO_0000431756" description="Succinate dehydrogenase subunit 7, mitochondrial" evidence="1">
    <location>
        <begin position="42"/>
        <end position="90"/>
    </location>
</feature>
<keyword id="KW-0472">Membrane</keyword>
<keyword id="KW-0496">Mitochondrion</keyword>
<keyword id="KW-0999">Mitochondrion inner membrane</keyword>
<keyword id="KW-1185">Reference proteome</keyword>
<keyword id="KW-0809">Transit peptide</keyword>
<keyword id="KW-0816">Tricarboxylic acid cycle</keyword>
<gene>
    <name evidence="3" type="primary">SDH7</name>
    <name evidence="5" type="ordered locus">Os09g0382500</name>
    <name evidence="3" type="ordered locus">LOC_Os09g21470</name>
    <name evidence="4" type="ORF">P0505H05.25</name>
</gene>
<sequence length="90" mass="9899">MAQPAFLSALRSRLRSPQPQAPALPHLQPPRRGFHVELGAREKALLEEDTALKRFKSYKNSVKQVSKVGNILTGVVLFACAYEIVALANS</sequence>
<evidence type="ECO:0000255" key="1"/>
<evidence type="ECO:0000269" key="2">
    <source>
    </source>
</evidence>
<evidence type="ECO:0000305" key="3"/>
<evidence type="ECO:0000312" key="4">
    <source>
        <dbReference type="EMBL" id="BAD25838.1"/>
    </source>
</evidence>
<evidence type="ECO:0000312" key="5">
    <source>
        <dbReference type="EMBL" id="BAF24979.1"/>
    </source>
</evidence>
<proteinExistence type="evidence at protein level"/>
<dbReference type="EMBL" id="AP005312">
    <property type="protein sequence ID" value="BAD25838.1"/>
    <property type="molecule type" value="Genomic_DNA"/>
</dbReference>
<dbReference type="EMBL" id="AP008215">
    <property type="protein sequence ID" value="BAF24979.1"/>
    <property type="molecule type" value="Genomic_DNA"/>
</dbReference>
<dbReference type="EMBL" id="AP014965">
    <property type="protein sequence ID" value="BAT07865.1"/>
    <property type="molecule type" value="Genomic_DNA"/>
</dbReference>
<dbReference type="EMBL" id="AK105199">
    <property type="protein sequence ID" value="BAG97135.1"/>
    <property type="molecule type" value="mRNA"/>
</dbReference>
<dbReference type="RefSeq" id="XP_015610641.1">
    <property type="nucleotide sequence ID" value="XM_015755155.1"/>
</dbReference>
<dbReference type="FunCoup" id="Q6H611">
    <property type="interactions" value="1575"/>
</dbReference>
<dbReference type="STRING" id="39947.Q6H611"/>
<dbReference type="PaxDb" id="39947-Q6H611"/>
<dbReference type="EnsemblPlants" id="Os09t0382500-01">
    <property type="protein sequence ID" value="Os09t0382500-01"/>
    <property type="gene ID" value="Os09g0382500"/>
</dbReference>
<dbReference type="Gramene" id="Os09t0382500-01">
    <property type="protein sequence ID" value="Os09t0382500-01"/>
    <property type="gene ID" value="Os09g0382500"/>
</dbReference>
<dbReference type="KEGG" id="dosa:Os09g0382500"/>
<dbReference type="eggNOG" id="ENOG502S3X7">
    <property type="taxonomic scope" value="Eukaryota"/>
</dbReference>
<dbReference type="HOGENOM" id="CLU_180305_0_0_1"/>
<dbReference type="InParanoid" id="Q6H611"/>
<dbReference type="OMA" id="CACAYEI"/>
<dbReference type="OrthoDB" id="684848at2759"/>
<dbReference type="UniPathway" id="UPA00223"/>
<dbReference type="Proteomes" id="UP000000763">
    <property type="component" value="Chromosome 9"/>
</dbReference>
<dbReference type="Proteomes" id="UP000059680">
    <property type="component" value="Chromosome 9"/>
</dbReference>
<dbReference type="GO" id="GO:0005743">
    <property type="term" value="C:mitochondrial inner membrane"/>
    <property type="evidence" value="ECO:0007669"/>
    <property type="project" value="UniProtKB-SubCell"/>
</dbReference>
<dbReference type="GO" id="GO:0045273">
    <property type="term" value="C:respiratory chain complex II (succinate dehydrogenase)"/>
    <property type="evidence" value="ECO:0000314"/>
    <property type="project" value="UniProtKB"/>
</dbReference>
<dbReference type="GO" id="GO:0006099">
    <property type="term" value="P:tricarboxylic acid cycle"/>
    <property type="evidence" value="ECO:0007669"/>
    <property type="project" value="UniProtKB-UniPathway"/>
</dbReference>
<dbReference type="InterPro" id="IPR034573">
    <property type="entry name" value="SDH7"/>
</dbReference>
<dbReference type="PANTHER" id="PTHR36041">
    <property type="entry name" value="SUCCINATE DEHYDROGENASE SUBUNIT 7A, MITOCHONDRIAL-RELATED"/>
    <property type="match status" value="1"/>
</dbReference>
<dbReference type="PANTHER" id="PTHR36041:SF2">
    <property type="entry name" value="SUCCINATE DEHYDROGENASE SUBUNIT 7A, MITOCHONDRIAL-RELATED"/>
    <property type="match status" value="1"/>
</dbReference>
<comment type="pathway">
    <text evidence="3">Carbohydrate metabolism; tricarboxylic acid cycle.</text>
</comment>
<comment type="subunit">
    <text evidence="2">Component of complex II composed of eight subunits in plants: four classical SDH subunits SDH1, SDH2, SDH3 and SDH4 (a flavoprotein (FP), an iron-sulfur protein (IP), and a cytochrome b composed of a large and a small subunit.), as well as four subunits unknown in mitochondria from bacteria and heterotrophic eukaryotes.</text>
</comment>
<comment type="subcellular location">
    <subcellularLocation>
        <location evidence="3">Mitochondrion inner membrane</location>
        <topology evidence="3">Peripheral membrane protein</topology>
    </subcellularLocation>
</comment>
<reference key="1">
    <citation type="journal article" date="2005" name="Nature">
        <title>The map-based sequence of the rice genome.</title>
        <authorList>
            <consortium name="International rice genome sequencing project (IRGSP)"/>
        </authorList>
    </citation>
    <scope>NUCLEOTIDE SEQUENCE [LARGE SCALE GENOMIC DNA]</scope>
    <source>
        <strain>cv. Nipponbare</strain>
    </source>
</reference>
<reference key="2">
    <citation type="journal article" date="2008" name="Nucleic Acids Res.">
        <title>The rice annotation project database (RAP-DB): 2008 update.</title>
        <authorList>
            <consortium name="The rice annotation project (RAP)"/>
        </authorList>
    </citation>
    <scope>GENOME REANNOTATION</scope>
    <source>
        <strain>cv. Nipponbare</strain>
    </source>
</reference>
<reference key="3">
    <citation type="journal article" date="2013" name="Rice">
        <title>Improvement of the Oryza sativa Nipponbare reference genome using next generation sequence and optical map data.</title>
        <authorList>
            <person name="Kawahara Y."/>
            <person name="de la Bastide M."/>
            <person name="Hamilton J.P."/>
            <person name="Kanamori H."/>
            <person name="McCombie W.R."/>
            <person name="Ouyang S."/>
            <person name="Schwartz D.C."/>
            <person name="Tanaka T."/>
            <person name="Wu J."/>
            <person name="Zhou S."/>
            <person name="Childs K.L."/>
            <person name="Davidson R.M."/>
            <person name="Lin H."/>
            <person name="Quesada-Ocampo L."/>
            <person name="Vaillancourt B."/>
            <person name="Sakai H."/>
            <person name="Lee S.S."/>
            <person name="Kim J."/>
            <person name="Numa H."/>
            <person name="Itoh T."/>
            <person name="Buell C.R."/>
            <person name="Matsumoto T."/>
        </authorList>
    </citation>
    <scope>GENOME REANNOTATION</scope>
    <source>
        <strain>cv. Nipponbare</strain>
    </source>
</reference>
<reference key="4">
    <citation type="journal article" date="2003" name="Science">
        <title>Collection, mapping, and annotation of over 28,000 cDNA clones from japonica rice.</title>
        <authorList>
            <consortium name="The rice full-length cDNA consortium"/>
        </authorList>
    </citation>
    <scope>NUCLEOTIDE SEQUENCE [LARGE SCALE MRNA]</scope>
    <source>
        <strain>cv. Nipponbare</strain>
    </source>
</reference>
<reference key="5">
    <citation type="journal article" date="2010" name="Plant Mol. Biol.">
        <title>Functional and composition differences between mitochondrial complex II in Arabidopsis and rice are correlated with the complex genetic history of the enzyme.</title>
        <authorList>
            <person name="Huang S."/>
            <person name="Taylor N.L."/>
            <person name="Narsai R."/>
            <person name="Eubel H."/>
            <person name="Whelan J."/>
            <person name="Millar A.H."/>
        </authorList>
    </citation>
    <scope>IDENTIFICATION BY MASS SPECTROMETRY</scope>
    <scope>SUBUNIT</scope>
</reference>
<protein>
    <recommendedName>
        <fullName evidence="3">Succinate dehydrogenase subunit 7, mitochondrial</fullName>
    </recommendedName>
</protein>
<organism>
    <name type="scientific">Oryza sativa subsp. japonica</name>
    <name type="common">Rice</name>
    <dbReference type="NCBI Taxonomy" id="39947"/>
    <lineage>
        <taxon>Eukaryota</taxon>
        <taxon>Viridiplantae</taxon>
        <taxon>Streptophyta</taxon>
        <taxon>Embryophyta</taxon>
        <taxon>Tracheophyta</taxon>
        <taxon>Spermatophyta</taxon>
        <taxon>Magnoliopsida</taxon>
        <taxon>Liliopsida</taxon>
        <taxon>Poales</taxon>
        <taxon>Poaceae</taxon>
        <taxon>BOP clade</taxon>
        <taxon>Oryzoideae</taxon>
        <taxon>Oryzeae</taxon>
        <taxon>Oryzinae</taxon>
        <taxon>Oryza</taxon>
        <taxon>Oryza sativa</taxon>
    </lineage>
</organism>
<name>SDH7_ORYSJ</name>